<reference key="1">
    <citation type="journal article" date="2004" name="Genome Res.">
        <title>The status, quality, and expansion of the NIH full-length cDNA project: the Mammalian Gene Collection (MGC).</title>
        <authorList>
            <consortium name="The MGC Project Team"/>
        </authorList>
    </citation>
    <scope>NUCLEOTIDE SEQUENCE [LARGE SCALE MRNA]</scope>
    <source>
        <tissue>Liver</tissue>
    </source>
</reference>
<evidence type="ECO:0000250" key="1">
    <source>
        <dbReference type="UniProtKB" id="P61960"/>
    </source>
</evidence>
<evidence type="ECO:0000305" key="2"/>
<evidence type="ECO:0000312" key="3">
    <source>
        <dbReference type="RGD" id="1304890"/>
    </source>
</evidence>
<accession>Q5BJP3</accession>
<feature type="chain" id="PRO_0000042130" description="Ubiquitin-fold modifier 1">
    <location>
        <begin position="1"/>
        <end position="83"/>
    </location>
</feature>
<feature type="propeptide" id="PRO_0000042131" description="Removed in mature form" evidence="1">
    <location>
        <begin position="84"/>
        <end position="85"/>
    </location>
</feature>
<feature type="cross-link" description="Glycyl lysine isopeptide (Lys-Gly) (interchain with G-Cter in UFM1)" evidence="1">
    <location>
        <position position="69"/>
    </location>
</feature>
<feature type="cross-link" description="Glycyl lysine isopeptide (Gly-Lys) (interchain with K-? in acceptor proteins)" evidence="1">
    <location>
        <position position="83"/>
    </location>
</feature>
<comment type="function">
    <text evidence="1">Ubiquitin-like modifier which can be covalently attached via an isopeptide bond to lysine residues of substrate proteins as a monomer or a lysine-linked polymer. The so-called ufmylation, requires the UFM1-activating E1 enzyme UBA5, the UFM1-conjugating E2 enzyme UFC1, and the UFM1-ligase E3 enzyme UFL1. Ufmylation is involved in various processes, such as ribosome recycling, response to DNA damage, transcription or reticulophagy (also called ER-phagy) induced in response to endoplasmic reticulum stress.</text>
</comment>
<comment type="subunit">
    <text evidence="1">Interacts with UBA5. Interacts with UFC1.</text>
</comment>
<comment type="subcellular location">
    <subcellularLocation>
        <location evidence="1">Nucleus</location>
    </subcellularLocation>
    <subcellularLocation>
        <location evidence="1">Cytoplasm</location>
    </subcellularLocation>
</comment>
<comment type="PTM">
    <text evidence="1">UFM1 precursor is cleaved by UFSP1, promoting its maturation: processing of the C-terminal Ser-Cys dipeptide is required to expose its C-terminal conserved Gly residue.</text>
</comment>
<comment type="similarity">
    <text evidence="2">Belongs to the UFM1 family.</text>
</comment>
<organism>
    <name type="scientific">Rattus norvegicus</name>
    <name type="common">Rat</name>
    <dbReference type="NCBI Taxonomy" id="10116"/>
    <lineage>
        <taxon>Eukaryota</taxon>
        <taxon>Metazoa</taxon>
        <taxon>Chordata</taxon>
        <taxon>Craniata</taxon>
        <taxon>Vertebrata</taxon>
        <taxon>Euteleostomi</taxon>
        <taxon>Mammalia</taxon>
        <taxon>Eutheria</taxon>
        <taxon>Euarchontoglires</taxon>
        <taxon>Glires</taxon>
        <taxon>Rodentia</taxon>
        <taxon>Myomorpha</taxon>
        <taxon>Muroidea</taxon>
        <taxon>Muridae</taxon>
        <taxon>Murinae</taxon>
        <taxon>Rattus</taxon>
    </lineage>
</organism>
<name>UFM1_RAT</name>
<gene>
    <name evidence="3" type="primary">Ufm1</name>
</gene>
<keyword id="KW-0963">Cytoplasm</keyword>
<keyword id="KW-1017">Isopeptide bond</keyword>
<keyword id="KW-0539">Nucleus</keyword>
<keyword id="KW-1185">Reference proteome</keyword>
<keyword id="KW-0832">Ubl conjugation</keyword>
<keyword id="KW-0833">Ubl conjugation pathway</keyword>
<dbReference type="EMBL" id="BC091395">
    <property type="protein sequence ID" value="AAH91395.1"/>
    <property type="molecule type" value="mRNA"/>
</dbReference>
<dbReference type="RefSeq" id="NP_001119552.1">
    <property type="nucleotide sequence ID" value="NM_001126080.2"/>
</dbReference>
<dbReference type="SMR" id="Q5BJP3"/>
<dbReference type="FunCoup" id="Q5BJP3">
    <property type="interactions" value="1960"/>
</dbReference>
<dbReference type="STRING" id="10116.ENSRNOP00000054923"/>
<dbReference type="iPTMnet" id="Q5BJP3"/>
<dbReference type="PhosphoSitePlus" id="Q5BJP3"/>
<dbReference type="jPOST" id="Q5BJP3"/>
<dbReference type="PaxDb" id="10116-ENSRNOP00000054923"/>
<dbReference type="GeneID" id="365797"/>
<dbReference type="KEGG" id="rno:365797"/>
<dbReference type="UCSC" id="RGD:1304890">
    <property type="organism name" value="rat"/>
</dbReference>
<dbReference type="AGR" id="RGD:1304890"/>
<dbReference type="CTD" id="51569"/>
<dbReference type="RGD" id="1304890">
    <property type="gene designation" value="Ufm1"/>
</dbReference>
<dbReference type="eggNOG" id="KOG3483">
    <property type="taxonomic scope" value="Eukaryota"/>
</dbReference>
<dbReference type="HOGENOM" id="CLU_175114_0_0_1"/>
<dbReference type="InParanoid" id="Q5BJP3"/>
<dbReference type="OrthoDB" id="284357at2759"/>
<dbReference type="PhylomeDB" id="Q5BJP3"/>
<dbReference type="TreeFam" id="TF312934"/>
<dbReference type="PRO" id="PR:Q5BJP3"/>
<dbReference type="Proteomes" id="UP000002494">
    <property type="component" value="Chromosome 2"/>
</dbReference>
<dbReference type="Bgee" id="ENSRNOG00000038176">
    <property type="expression patterns" value="Expressed in pancreas and 20 other cell types or tissues"/>
</dbReference>
<dbReference type="GO" id="GO:0005737">
    <property type="term" value="C:cytoplasm"/>
    <property type="evidence" value="ECO:0000250"/>
    <property type="project" value="UniProtKB"/>
</dbReference>
<dbReference type="GO" id="GO:0005783">
    <property type="term" value="C:endoplasmic reticulum"/>
    <property type="evidence" value="ECO:0000266"/>
    <property type="project" value="RGD"/>
</dbReference>
<dbReference type="GO" id="GO:0005634">
    <property type="term" value="C:nucleus"/>
    <property type="evidence" value="ECO:0000250"/>
    <property type="project" value="UniProtKB"/>
</dbReference>
<dbReference type="GO" id="GO:0007420">
    <property type="term" value="P:brain development"/>
    <property type="evidence" value="ECO:0000250"/>
    <property type="project" value="UniProtKB"/>
</dbReference>
<dbReference type="GO" id="GO:0043066">
    <property type="term" value="P:negative regulation of apoptotic process"/>
    <property type="evidence" value="ECO:0000315"/>
    <property type="project" value="ParkinsonsUK-UCL"/>
</dbReference>
<dbReference type="GO" id="GO:0042308">
    <property type="term" value="P:negative regulation of protein import into nucleus"/>
    <property type="evidence" value="ECO:0000266"/>
    <property type="project" value="RGD"/>
</dbReference>
<dbReference type="GO" id="GO:1990592">
    <property type="term" value="P:protein K69-linked ufmylation"/>
    <property type="evidence" value="ECO:0000250"/>
    <property type="project" value="UniProtKB"/>
</dbReference>
<dbReference type="GO" id="GO:0071569">
    <property type="term" value="P:protein ufmylation"/>
    <property type="evidence" value="ECO:0000250"/>
    <property type="project" value="UniProtKB"/>
</dbReference>
<dbReference type="GO" id="GO:0033146">
    <property type="term" value="P:regulation of intracellular estrogen receptor signaling pathway"/>
    <property type="evidence" value="ECO:0000250"/>
    <property type="project" value="UniProtKB"/>
</dbReference>
<dbReference type="GO" id="GO:0034976">
    <property type="term" value="P:response to endoplasmic reticulum stress"/>
    <property type="evidence" value="ECO:0000250"/>
    <property type="project" value="UniProtKB"/>
</dbReference>
<dbReference type="GO" id="GO:0061709">
    <property type="term" value="P:reticulophagy"/>
    <property type="evidence" value="ECO:0000250"/>
    <property type="project" value="UniProtKB"/>
</dbReference>
<dbReference type="CDD" id="cd01766">
    <property type="entry name" value="Ubl_UFM1"/>
    <property type="match status" value="1"/>
</dbReference>
<dbReference type="FunFam" id="3.10.20.90:FF:000044">
    <property type="entry name" value="Ubiquitin-fold modifier 1"/>
    <property type="match status" value="1"/>
</dbReference>
<dbReference type="Gene3D" id="3.10.20.90">
    <property type="entry name" value="Phosphatidylinositol 3-kinase Catalytic Subunit, Chain A, domain 1"/>
    <property type="match status" value="1"/>
</dbReference>
<dbReference type="InterPro" id="IPR029071">
    <property type="entry name" value="Ubiquitin-like_domsf"/>
</dbReference>
<dbReference type="InterPro" id="IPR005375">
    <property type="entry name" value="UFM1"/>
</dbReference>
<dbReference type="PANTHER" id="PTHR15825">
    <property type="entry name" value="UBIQUITIN-FOLD MODIFIER 1"/>
    <property type="match status" value="1"/>
</dbReference>
<dbReference type="PANTHER" id="PTHR15825:SF0">
    <property type="entry name" value="UBIQUITIN-FOLD MODIFIER 1"/>
    <property type="match status" value="1"/>
</dbReference>
<dbReference type="Pfam" id="PF03671">
    <property type="entry name" value="Ufm1"/>
    <property type="match status" value="1"/>
</dbReference>
<dbReference type="PIRSF" id="PIRSF038027">
    <property type="entry name" value="Ubiquitin-like_Ufm1"/>
    <property type="match status" value="1"/>
</dbReference>
<dbReference type="SUPFAM" id="SSF54236">
    <property type="entry name" value="Ubiquitin-like"/>
    <property type="match status" value="1"/>
</dbReference>
<proteinExistence type="inferred from homology"/>
<protein>
    <recommendedName>
        <fullName evidence="1">Ubiquitin-fold modifier 1</fullName>
    </recommendedName>
</protein>
<sequence>MSKVSFKITLTSDPRLPYKVLSVPESTPFTAVLKFAAEEFKVPAATSAIITNDGIGINPAQTAGNVFLKHGSELRLIPRDRVGSC</sequence>